<organism>
    <name type="scientific">Enterococcus faecalis (strain ATCC 700802 / V583)</name>
    <dbReference type="NCBI Taxonomy" id="226185"/>
    <lineage>
        <taxon>Bacteria</taxon>
        <taxon>Bacillati</taxon>
        <taxon>Bacillota</taxon>
        <taxon>Bacilli</taxon>
        <taxon>Lactobacillales</taxon>
        <taxon>Enterococcaceae</taxon>
        <taxon>Enterococcus</taxon>
    </lineage>
</organism>
<sequence length="99" mass="11541">MLKPSIDSLLKEVPSKYSLVILASKRAHELDEGVQPTVESFDSVKSVGRALEEIEAGTVISDPNPEEKRERLRIEREERKRQREQEQKELENRLRDEKN</sequence>
<protein>
    <recommendedName>
        <fullName evidence="1">DNA-directed RNA polymerase subunit omega</fullName>
        <shortName evidence="1">RNAP omega subunit</shortName>
        <ecNumber evidence="1">2.7.7.6</ecNumber>
    </recommendedName>
    <alternativeName>
        <fullName evidence="1">RNA polymerase omega subunit</fullName>
    </alternativeName>
    <alternativeName>
        <fullName evidence="1">Transcriptase subunit omega</fullName>
    </alternativeName>
</protein>
<evidence type="ECO:0000255" key="1">
    <source>
        <dbReference type="HAMAP-Rule" id="MF_00366"/>
    </source>
</evidence>
<evidence type="ECO:0000256" key="2">
    <source>
        <dbReference type="SAM" id="MobiDB-lite"/>
    </source>
</evidence>
<proteinExistence type="inferred from homology"/>
<gene>
    <name evidence="1" type="primary">rpoZ</name>
    <name type="ordered locus">EF_3126</name>
</gene>
<dbReference type="EC" id="2.7.7.6" evidence="1"/>
<dbReference type="EMBL" id="AE016830">
    <property type="protein sequence ID" value="AAO82805.1"/>
    <property type="molecule type" value="Genomic_DNA"/>
</dbReference>
<dbReference type="RefSeq" id="NP_816735.1">
    <property type="nucleotide sequence ID" value="NC_004668.1"/>
</dbReference>
<dbReference type="SMR" id="Q82ZD6"/>
<dbReference type="STRING" id="226185.EF_3126"/>
<dbReference type="EnsemblBacteria" id="AAO82805">
    <property type="protein sequence ID" value="AAO82805"/>
    <property type="gene ID" value="EF_3126"/>
</dbReference>
<dbReference type="KEGG" id="efa:EF3126"/>
<dbReference type="PATRIC" id="fig|226185.9.peg.2917"/>
<dbReference type="eggNOG" id="COG1758">
    <property type="taxonomic scope" value="Bacteria"/>
</dbReference>
<dbReference type="HOGENOM" id="CLU_125406_0_0_9"/>
<dbReference type="Proteomes" id="UP000001415">
    <property type="component" value="Chromosome"/>
</dbReference>
<dbReference type="GO" id="GO:0000428">
    <property type="term" value="C:DNA-directed RNA polymerase complex"/>
    <property type="evidence" value="ECO:0007669"/>
    <property type="project" value="UniProtKB-KW"/>
</dbReference>
<dbReference type="GO" id="GO:0003677">
    <property type="term" value="F:DNA binding"/>
    <property type="evidence" value="ECO:0007669"/>
    <property type="project" value="UniProtKB-UniRule"/>
</dbReference>
<dbReference type="GO" id="GO:0003899">
    <property type="term" value="F:DNA-directed RNA polymerase activity"/>
    <property type="evidence" value="ECO:0007669"/>
    <property type="project" value="UniProtKB-UniRule"/>
</dbReference>
<dbReference type="GO" id="GO:0006351">
    <property type="term" value="P:DNA-templated transcription"/>
    <property type="evidence" value="ECO:0007669"/>
    <property type="project" value="UniProtKB-UniRule"/>
</dbReference>
<dbReference type="Gene3D" id="3.90.940.10">
    <property type="match status" value="1"/>
</dbReference>
<dbReference type="HAMAP" id="MF_00366">
    <property type="entry name" value="RNApol_bact_RpoZ"/>
    <property type="match status" value="1"/>
</dbReference>
<dbReference type="InterPro" id="IPR003716">
    <property type="entry name" value="DNA-dir_RNA_pol_omega"/>
</dbReference>
<dbReference type="InterPro" id="IPR006110">
    <property type="entry name" value="Pol_omega/Rpo6/RPB6"/>
</dbReference>
<dbReference type="InterPro" id="IPR036161">
    <property type="entry name" value="RPB6/omega-like_sf"/>
</dbReference>
<dbReference type="NCBIfam" id="TIGR00690">
    <property type="entry name" value="rpoZ"/>
    <property type="match status" value="1"/>
</dbReference>
<dbReference type="PANTHER" id="PTHR34476">
    <property type="entry name" value="DNA-DIRECTED RNA POLYMERASE SUBUNIT OMEGA"/>
    <property type="match status" value="1"/>
</dbReference>
<dbReference type="PANTHER" id="PTHR34476:SF1">
    <property type="entry name" value="DNA-DIRECTED RNA POLYMERASE SUBUNIT OMEGA"/>
    <property type="match status" value="1"/>
</dbReference>
<dbReference type="Pfam" id="PF01192">
    <property type="entry name" value="RNA_pol_Rpb6"/>
    <property type="match status" value="1"/>
</dbReference>
<dbReference type="SMART" id="SM01409">
    <property type="entry name" value="RNA_pol_Rpb6"/>
    <property type="match status" value="1"/>
</dbReference>
<dbReference type="SUPFAM" id="SSF63562">
    <property type="entry name" value="RPB6/omega subunit-like"/>
    <property type="match status" value="1"/>
</dbReference>
<keyword id="KW-0240">DNA-directed RNA polymerase</keyword>
<keyword id="KW-0548">Nucleotidyltransferase</keyword>
<keyword id="KW-1185">Reference proteome</keyword>
<keyword id="KW-0804">Transcription</keyword>
<keyword id="KW-0808">Transferase</keyword>
<feature type="chain" id="PRO_0000128938" description="DNA-directed RNA polymerase subunit omega">
    <location>
        <begin position="1"/>
        <end position="99"/>
    </location>
</feature>
<feature type="region of interest" description="Disordered" evidence="2">
    <location>
        <begin position="55"/>
        <end position="99"/>
    </location>
</feature>
<feature type="compositionally biased region" description="Basic and acidic residues" evidence="2">
    <location>
        <begin position="65"/>
        <end position="99"/>
    </location>
</feature>
<comment type="function">
    <text evidence="1">Promotes RNA polymerase assembly. Latches the N- and C-terminal regions of the beta' subunit thereby facilitating its interaction with the beta and alpha subunits.</text>
</comment>
<comment type="catalytic activity">
    <reaction evidence="1">
        <text>RNA(n) + a ribonucleoside 5'-triphosphate = RNA(n+1) + diphosphate</text>
        <dbReference type="Rhea" id="RHEA:21248"/>
        <dbReference type="Rhea" id="RHEA-COMP:14527"/>
        <dbReference type="Rhea" id="RHEA-COMP:17342"/>
        <dbReference type="ChEBI" id="CHEBI:33019"/>
        <dbReference type="ChEBI" id="CHEBI:61557"/>
        <dbReference type="ChEBI" id="CHEBI:140395"/>
        <dbReference type="EC" id="2.7.7.6"/>
    </reaction>
</comment>
<comment type="subunit">
    <text evidence="1">The RNAP catalytic core consists of 2 alpha, 1 beta, 1 beta' and 1 omega subunit. When a sigma factor is associated with the core the holoenzyme is formed, which can initiate transcription.</text>
</comment>
<comment type="similarity">
    <text evidence="1">Belongs to the RNA polymerase subunit omega family.</text>
</comment>
<name>RPOZ_ENTFA</name>
<reference key="1">
    <citation type="journal article" date="2003" name="Science">
        <title>Role of mobile DNA in the evolution of vancomycin-resistant Enterococcus faecalis.</title>
        <authorList>
            <person name="Paulsen I.T."/>
            <person name="Banerjei L."/>
            <person name="Myers G.S.A."/>
            <person name="Nelson K.E."/>
            <person name="Seshadri R."/>
            <person name="Read T.D."/>
            <person name="Fouts D.E."/>
            <person name="Eisen J.A."/>
            <person name="Gill S.R."/>
            <person name="Heidelberg J.F."/>
            <person name="Tettelin H."/>
            <person name="Dodson R.J."/>
            <person name="Umayam L.A."/>
            <person name="Brinkac L.M."/>
            <person name="Beanan M.J."/>
            <person name="Daugherty S.C."/>
            <person name="DeBoy R.T."/>
            <person name="Durkin S.A."/>
            <person name="Kolonay J.F."/>
            <person name="Madupu R."/>
            <person name="Nelson W.C."/>
            <person name="Vamathevan J.J."/>
            <person name="Tran B."/>
            <person name="Upton J."/>
            <person name="Hansen T."/>
            <person name="Shetty J."/>
            <person name="Khouri H.M."/>
            <person name="Utterback T.R."/>
            <person name="Radune D."/>
            <person name="Ketchum K.A."/>
            <person name="Dougherty B.A."/>
            <person name="Fraser C.M."/>
        </authorList>
    </citation>
    <scope>NUCLEOTIDE SEQUENCE [LARGE SCALE GENOMIC DNA]</scope>
    <source>
        <strain>ATCC 700802 / V583</strain>
    </source>
</reference>
<accession>Q82ZD6</accession>